<reference key="1">
    <citation type="submission" date="2004-07" db="EMBL/GenBank/DDBJ databases">
        <authorList>
            <consortium name="NIH - Xenopus Gene Collection (XGC) project"/>
        </authorList>
    </citation>
    <scope>NUCLEOTIDE SEQUENCE [LARGE SCALE MRNA]</scope>
    <source>
        <tissue>Oocyte</tissue>
    </source>
</reference>
<protein>
    <recommendedName>
        <fullName>LysM and putative peptidoglycan-binding domain-containing protein 4</fullName>
    </recommendedName>
</protein>
<organism>
    <name type="scientific">Xenopus laevis</name>
    <name type="common">African clawed frog</name>
    <dbReference type="NCBI Taxonomy" id="8355"/>
    <lineage>
        <taxon>Eukaryota</taxon>
        <taxon>Metazoa</taxon>
        <taxon>Chordata</taxon>
        <taxon>Craniata</taxon>
        <taxon>Vertebrata</taxon>
        <taxon>Euteleostomi</taxon>
        <taxon>Amphibia</taxon>
        <taxon>Batrachia</taxon>
        <taxon>Anura</taxon>
        <taxon>Pipoidea</taxon>
        <taxon>Pipidae</taxon>
        <taxon>Xenopodinae</taxon>
        <taxon>Xenopus</taxon>
        <taxon>Xenopus</taxon>
    </lineage>
</organism>
<keyword id="KW-0325">Glycoprotein</keyword>
<keyword id="KW-0472">Membrane</keyword>
<keyword id="KW-1185">Reference proteome</keyword>
<keyword id="KW-0812">Transmembrane</keyword>
<keyword id="KW-1133">Transmembrane helix</keyword>
<name>LYSM4_XENLA</name>
<accession>Q6DCC7</accession>
<feature type="chain" id="PRO_0000248017" description="LysM and putative peptidoglycan-binding domain-containing protein 4">
    <location>
        <begin position="1"/>
        <end position="289"/>
    </location>
</feature>
<feature type="topological domain" description="Extracellular" evidence="1">
    <location>
        <begin position="1"/>
        <end position="208"/>
    </location>
</feature>
<feature type="transmembrane region" description="Helical" evidence="1">
    <location>
        <begin position="209"/>
        <end position="229"/>
    </location>
</feature>
<feature type="topological domain" description="Cytoplasmic" evidence="1">
    <location>
        <begin position="230"/>
        <end position="289"/>
    </location>
</feature>
<feature type="domain" description="LysM" evidence="2">
    <location>
        <begin position="71"/>
        <end position="115"/>
    </location>
</feature>
<feature type="region of interest" description="Disordered" evidence="3">
    <location>
        <begin position="1"/>
        <end position="23"/>
    </location>
</feature>
<feature type="region of interest" description="Disordered" evidence="3">
    <location>
        <begin position="252"/>
        <end position="272"/>
    </location>
</feature>
<feature type="compositionally biased region" description="Polar residues" evidence="3">
    <location>
        <begin position="9"/>
        <end position="23"/>
    </location>
</feature>
<feature type="glycosylation site" description="N-linked (GlcNAc...) asparagine" evidence="1">
    <location>
        <position position="30"/>
    </location>
</feature>
<feature type="glycosylation site" description="N-linked (GlcNAc...) asparagine" evidence="1">
    <location>
        <position position="59"/>
    </location>
</feature>
<feature type="glycosylation site" description="N-linked (GlcNAc...) asparagine" evidence="1">
    <location>
        <position position="134"/>
    </location>
</feature>
<feature type="glycosylation site" description="N-linked (GlcNAc...) asparagine" evidence="1">
    <location>
        <position position="178"/>
    </location>
</feature>
<gene>
    <name type="primary">lysmd4</name>
</gene>
<comment type="subcellular location">
    <subcellularLocation>
        <location evidence="4">Membrane</location>
        <topology evidence="4">Single-pass membrane protein</topology>
    </subcellularLocation>
</comment>
<sequence length="289" mass="32054">MRLREGPTHSFQPPSSVHSSLGSHVYTFSNGTAEADSSSEEEFDVMELRARGGEQQRINASREKVGNVILLERAITEDDNLNKLALQYGCKVSDIKRVNNLITDQDIYALKTIKIPVKVHGLLTERRDELTAFNASAPPEPEKELSLPSMESRDFTVYFKAIDQNIEEAAAQTHDLFNESFALDSPSLPPTRILGQKQPASGADWGIRWWNAVFIMLLVGIVLPVFYIVYFKTQGDSEGTFSIEGRTNVSTSLSPHTNTGHSMEQMTQRTSGFSPGLLQDTHKLLNPGG</sequence>
<evidence type="ECO:0000255" key="1"/>
<evidence type="ECO:0000255" key="2">
    <source>
        <dbReference type="PROSITE-ProRule" id="PRU01118"/>
    </source>
</evidence>
<evidence type="ECO:0000256" key="3">
    <source>
        <dbReference type="SAM" id="MobiDB-lite"/>
    </source>
</evidence>
<evidence type="ECO:0000305" key="4"/>
<dbReference type="EMBL" id="BC078121">
    <property type="protein sequence ID" value="AAH78121.1"/>
    <property type="molecule type" value="mRNA"/>
</dbReference>
<dbReference type="RefSeq" id="NP_001087174.1">
    <property type="nucleotide sequence ID" value="NM_001093705.1"/>
</dbReference>
<dbReference type="RefSeq" id="XP_018106538.1">
    <property type="nucleotide sequence ID" value="XM_018251049.1"/>
</dbReference>
<dbReference type="SMR" id="Q6DCC7"/>
<dbReference type="GlyCosmos" id="Q6DCC7">
    <property type="glycosylation" value="4 sites, No reported glycans"/>
</dbReference>
<dbReference type="DNASU" id="447063"/>
<dbReference type="GeneID" id="447063"/>
<dbReference type="KEGG" id="xla:447063"/>
<dbReference type="AGR" id="Xenbase:XB-GENE-6077965"/>
<dbReference type="CTD" id="447063"/>
<dbReference type="Xenbase" id="XB-GENE-6077965">
    <property type="gene designation" value="lysmd4.L"/>
</dbReference>
<dbReference type="OMA" id="ESYCVET"/>
<dbReference type="OrthoDB" id="538216at2759"/>
<dbReference type="Proteomes" id="UP000186698">
    <property type="component" value="Chromosome 3L"/>
</dbReference>
<dbReference type="Bgee" id="447063">
    <property type="expression patterns" value="Expressed in blastula and 19 other cell types or tissues"/>
</dbReference>
<dbReference type="GO" id="GO:0016020">
    <property type="term" value="C:membrane"/>
    <property type="evidence" value="ECO:0007669"/>
    <property type="project" value="UniProtKB-SubCell"/>
</dbReference>
<dbReference type="CDD" id="cd00118">
    <property type="entry name" value="LysM"/>
    <property type="match status" value="1"/>
</dbReference>
<dbReference type="Gene3D" id="3.10.350.10">
    <property type="entry name" value="LysM domain"/>
    <property type="match status" value="1"/>
</dbReference>
<dbReference type="InterPro" id="IPR045030">
    <property type="entry name" value="LYSM1-4"/>
</dbReference>
<dbReference type="InterPro" id="IPR018392">
    <property type="entry name" value="LysM_dom"/>
</dbReference>
<dbReference type="InterPro" id="IPR036779">
    <property type="entry name" value="LysM_dom_sf"/>
</dbReference>
<dbReference type="PANTHER" id="PTHR20932:SF7">
    <property type="entry name" value="AND PUTATIVE PEPTIDOGLYCAN-BINDING DOMAIN-CONTAINING PROTEIN 4-RELATED"/>
    <property type="match status" value="1"/>
</dbReference>
<dbReference type="PANTHER" id="PTHR20932">
    <property type="entry name" value="LYSM AND PUTATIVE PEPTIDOGLYCAN-BINDING DOMAIN-CONTAINING PROTEIN"/>
    <property type="match status" value="1"/>
</dbReference>
<dbReference type="Pfam" id="PF01476">
    <property type="entry name" value="LysM"/>
    <property type="match status" value="1"/>
</dbReference>
<dbReference type="SMART" id="SM00257">
    <property type="entry name" value="LysM"/>
    <property type="match status" value="1"/>
</dbReference>
<dbReference type="PROSITE" id="PS51782">
    <property type="entry name" value="LYSM"/>
    <property type="match status" value="1"/>
</dbReference>
<proteinExistence type="evidence at transcript level"/>